<accession>Q5FVA9</accession>
<keyword id="KW-0131">Cell cycle</keyword>
<keyword id="KW-0132">Cell division</keyword>
<keyword id="KW-0963">Cytoplasm</keyword>
<keyword id="KW-0206">Cytoskeleton</keyword>
<keyword id="KW-0498">Mitosis</keyword>
<keyword id="KW-0539">Nucleus</keyword>
<keyword id="KW-1185">Reference proteome</keyword>
<keyword id="KW-0677">Repeat</keyword>
<keyword id="KW-0813">Transport</keyword>
<keyword id="KW-0853">WD repeat</keyword>
<proteinExistence type="evidence at transcript level"/>
<reference key="1">
    <citation type="submission" date="2006-10" db="EMBL/GenBank/DDBJ databases">
        <authorList>
            <consortium name="Sanger Xenopus tropicalis EST/cDNA project"/>
        </authorList>
    </citation>
    <scope>NUCLEOTIDE SEQUENCE [LARGE SCALE MRNA]</scope>
    <source>
        <tissue>Egg</tissue>
    </source>
</reference>
<reference key="2">
    <citation type="submission" date="2005-02" db="EMBL/GenBank/DDBJ databases">
        <authorList>
            <consortium name="NIH - Xenopus Gene Collection (XGC) project"/>
        </authorList>
    </citation>
    <scope>NUCLEOTIDE SEQUENCE [LARGE SCALE MRNA]</scope>
    <source>
        <tissue>Embryo</tissue>
    </source>
</reference>
<name>RAE1L_XENTR</name>
<feature type="chain" id="PRO_0000312983" description="mRNA export factor">
    <location>
        <begin position="1"/>
        <end position="368"/>
    </location>
</feature>
<feature type="repeat" description="WD 1">
    <location>
        <begin position="37"/>
        <end position="79"/>
    </location>
</feature>
<feature type="repeat" description="WD 2">
    <location>
        <begin position="84"/>
        <end position="114"/>
    </location>
</feature>
<feature type="repeat" description="WD 3">
    <location>
        <begin position="125"/>
        <end position="157"/>
    </location>
</feature>
<feature type="repeat" description="WD 4">
    <location>
        <begin position="168"/>
        <end position="206"/>
    </location>
</feature>
<feature type="repeat" description="WD 5">
    <location>
        <begin position="215"/>
        <end position="255"/>
    </location>
</feature>
<feature type="repeat" description="WD 6">
    <location>
        <begin position="271"/>
        <end position="301"/>
    </location>
</feature>
<feature type="repeat" description="WD 7">
    <location>
        <begin position="310"/>
        <end position="346"/>
    </location>
</feature>
<feature type="region of interest" description="Disordered" evidence="2">
    <location>
        <begin position="1"/>
        <end position="37"/>
    </location>
</feature>
<feature type="compositionally biased region" description="Gly residues" evidence="2">
    <location>
        <begin position="8"/>
        <end position="17"/>
    </location>
</feature>
<gene>
    <name type="primary">rae1</name>
    <name type="synonym">mrnp41</name>
    <name type="ORF">TEgg053e05.1</name>
</gene>
<organism>
    <name type="scientific">Xenopus tropicalis</name>
    <name type="common">Western clawed frog</name>
    <name type="synonym">Silurana tropicalis</name>
    <dbReference type="NCBI Taxonomy" id="8364"/>
    <lineage>
        <taxon>Eukaryota</taxon>
        <taxon>Metazoa</taxon>
        <taxon>Chordata</taxon>
        <taxon>Craniata</taxon>
        <taxon>Vertebrata</taxon>
        <taxon>Euteleostomi</taxon>
        <taxon>Amphibia</taxon>
        <taxon>Batrachia</taxon>
        <taxon>Anura</taxon>
        <taxon>Pipoidea</taxon>
        <taxon>Pipidae</taxon>
        <taxon>Xenopodinae</taxon>
        <taxon>Xenopus</taxon>
        <taxon>Silurana</taxon>
    </lineage>
</organism>
<evidence type="ECO:0000250" key="1">
    <source>
        <dbReference type="UniProtKB" id="P78406"/>
    </source>
</evidence>
<evidence type="ECO:0000256" key="2">
    <source>
        <dbReference type="SAM" id="MobiDB-lite"/>
    </source>
</evidence>
<evidence type="ECO:0000305" key="3"/>
<sequence>MSLFSTPGGFGTGGGSMFGSTATDNHNPMKDIEVTSPPDDSISCLSFSPPTLPGNFLIAGSWANDVRCWEVQDNGQTIPKAQQMHTGPVLDVCWSDDGSKVFTASCDKTAKMWDLNSNQSIQIAQHDAPIKTVHWVKAPNYSCIMTGSWDKSLKFWDTRSPNPLLTLQLPERCYCADVVYPMAVVATAERGLIVYQLENQPSEFRRIDSPLKHQHRCVAIFKDKQNKPTGFALGSIEGRVAIHYINPPNPAKDNFTFKCHRSNGTNTTAPQDIYAVNGIAFHPVHGTLATVGSDGRFSFWDKDARTKLKTSEQLDQPISACSFNHNGNIFAYSSSYDWSKGHEFYNPQKKNYIFLRNAAEELKPRNKK</sequence>
<dbReference type="EMBL" id="CR760979">
    <property type="protein sequence ID" value="CAJ82097.1"/>
    <property type="molecule type" value="mRNA"/>
</dbReference>
<dbReference type="EMBL" id="BC090109">
    <property type="protein sequence ID" value="AAH90109.1"/>
    <property type="molecule type" value="mRNA"/>
</dbReference>
<dbReference type="RefSeq" id="NP_001017142.1">
    <property type="nucleotide sequence ID" value="NM_001017142.2"/>
</dbReference>
<dbReference type="RefSeq" id="XP_031749987.1">
    <property type="nucleotide sequence ID" value="XM_031894127.1"/>
</dbReference>
<dbReference type="RefSeq" id="XP_031749988.1">
    <property type="nucleotide sequence ID" value="XM_031894128.1"/>
</dbReference>
<dbReference type="SMR" id="Q5FVA9"/>
<dbReference type="FunCoup" id="Q5FVA9">
    <property type="interactions" value="4096"/>
</dbReference>
<dbReference type="GeneID" id="549896"/>
<dbReference type="KEGG" id="xtr:549896"/>
<dbReference type="AGR" id="Xenbase:XB-GENE-995595"/>
<dbReference type="CTD" id="8480"/>
<dbReference type="Xenbase" id="XB-GENE-995595">
    <property type="gene designation" value="rae1"/>
</dbReference>
<dbReference type="InParanoid" id="Q5FVA9"/>
<dbReference type="OMA" id="EAMDQSI"/>
<dbReference type="OrthoDB" id="256303at2759"/>
<dbReference type="Reactome" id="R-XTR-170822">
    <property type="pathway name" value="Regulation of Glucokinase by Glucokinase Regulatory Protein"/>
</dbReference>
<dbReference type="Reactome" id="R-XTR-3108214">
    <property type="pathway name" value="SUMOylation of DNA damage response and repair proteins"/>
</dbReference>
<dbReference type="Reactome" id="R-XTR-3232142">
    <property type="pathway name" value="SUMOylation of ubiquitinylation proteins"/>
</dbReference>
<dbReference type="Reactome" id="R-XTR-3301854">
    <property type="pathway name" value="Nuclear Pore Complex (NPC) Disassembly"/>
</dbReference>
<dbReference type="Reactome" id="R-XTR-3371453">
    <property type="pathway name" value="Regulation of HSF1-mediated heat shock response"/>
</dbReference>
<dbReference type="Reactome" id="R-XTR-4085377">
    <property type="pathway name" value="SUMOylation of SUMOylation proteins"/>
</dbReference>
<dbReference type="Reactome" id="R-XTR-4570464">
    <property type="pathway name" value="SUMOylation of RNA binding proteins"/>
</dbReference>
<dbReference type="Reactome" id="R-XTR-4615885">
    <property type="pathway name" value="SUMOylation of DNA replication proteins"/>
</dbReference>
<dbReference type="Proteomes" id="UP000008143">
    <property type="component" value="Chromosome 10"/>
</dbReference>
<dbReference type="GO" id="GO:0005737">
    <property type="term" value="C:cytoplasm"/>
    <property type="evidence" value="ECO:0007669"/>
    <property type="project" value="UniProtKB-SubCell"/>
</dbReference>
<dbReference type="GO" id="GO:0097431">
    <property type="term" value="C:mitotic spindle pole"/>
    <property type="evidence" value="ECO:0000250"/>
    <property type="project" value="UniProtKB"/>
</dbReference>
<dbReference type="GO" id="GO:0005634">
    <property type="term" value="C:nucleus"/>
    <property type="evidence" value="ECO:0007669"/>
    <property type="project" value="UniProtKB-SubCell"/>
</dbReference>
<dbReference type="GO" id="GO:0051301">
    <property type="term" value="P:cell division"/>
    <property type="evidence" value="ECO:0007669"/>
    <property type="project" value="UniProtKB-KW"/>
</dbReference>
<dbReference type="GO" id="GO:0060236">
    <property type="term" value="P:regulation of mitotic spindle organization"/>
    <property type="evidence" value="ECO:0000250"/>
    <property type="project" value="UniProtKB"/>
</dbReference>
<dbReference type="FunFam" id="2.130.10.10:FF:000084">
    <property type="entry name" value="mRNA export factor"/>
    <property type="match status" value="1"/>
</dbReference>
<dbReference type="Gene3D" id="2.130.10.10">
    <property type="entry name" value="YVTN repeat-like/Quinoprotein amine dehydrogenase"/>
    <property type="match status" value="1"/>
</dbReference>
<dbReference type="InterPro" id="IPR020472">
    <property type="entry name" value="G-protein_beta_WD-40_rep"/>
</dbReference>
<dbReference type="InterPro" id="IPR015943">
    <property type="entry name" value="WD40/YVTN_repeat-like_dom_sf"/>
</dbReference>
<dbReference type="InterPro" id="IPR019775">
    <property type="entry name" value="WD40_repeat_CS"/>
</dbReference>
<dbReference type="InterPro" id="IPR036322">
    <property type="entry name" value="WD40_repeat_dom_sf"/>
</dbReference>
<dbReference type="InterPro" id="IPR001680">
    <property type="entry name" value="WD40_rpt"/>
</dbReference>
<dbReference type="PANTHER" id="PTHR10971">
    <property type="entry name" value="MRNA EXPORT FACTOR AND BUB3"/>
    <property type="match status" value="1"/>
</dbReference>
<dbReference type="Pfam" id="PF00400">
    <property type="entry name" value="WD40"/>
    <property type="match status" value="3"/>
</dbReference>
<dbReference type="PRINTS" id="PR00320">
    <property type="entry name" value="GPROTEINBRPT"/>
</dbReference>
<dbReference type="SMART" id="SM00320">
    <property type="entry name" value="WD40"/>
    <property type="match status" value="4"/>
</dbReference>
<dbReference type="SUPFAM" id="SSF50978">
    <property type="entry name" value="WD40 repeat-like"/>
    <property type="match status" value="1"/>
</dbReference>
<dbReference type="PROSITE" id="PS00678">
    <property type="entry name" value="WD_REPEATS_1"/>
    <property type="match status" value="2"/>
</dbReference>
<dbReference type="PROSITE" id="PS50082">
    <property type="entry name" value="WD_REPEATS_2"/>
    <property type="match status" value="3"/>
</dbReference>
<dbReference type="PROSITE" id="PS50294">
    <property type="entry name" value="WD_REPEATS_REGION"/>
    <property type="match status" value="1"/>
</dbReference>
<protein>
    <recommendedName>
        <fullName>mRNA export factor</fullName>
    </recommendedName>
    <alternativeName>
        <fullName>Rae1 protein homolog</fullName>
    </alternativeName>
    <alternativeName>
        <fullName>mRNA-associated protein mrnp 41</fullName>
    </alternativeName>
</protein>
<comment type="function">
    <text evidence="1">Plays a role in mitotic bipolar spindle formation. Binds mRNA. May function in nucleocytoplasmic transport and in directly or indirectly attaching cytoplasmic mRNPs to the cytoskeleton.</text>
</comment>
<comment type="subcellular location">
    <subcellularLocation>
        <location evidence="1">Cytoplasm</location>
    </subcellularLocation>
    <subcellularLocation>
        <location evidence="1">Nucleus</location>
    </subcellularLocation>
    <subcellularLocation>
        <location evidence="1">Cytoplasm</location>
        <location evidence="1">Cytoskeleton</location>
        <location evidence="1">Spindle pole</location>
    </subcellularLocation>
</comment>
<comment type="similarity">
    <text evidence="3">Belongs to the WD repeat rae1 family.</text>
</comment>